<proteinExistence type="inferred from homology"/>
<gene>
    <name type="primary">tonB</name>
    <name type="ordered locus">HI_0251</name>
</gene>
<protein>
    <recommendedName>
        <fullName>Protein TonB</fullName>
    </recommendedName>
</protein>
<comment type="function">
    <text>Interacts with outer membrane receptor proteins that carry out high-affinity binding and energy dependent uptake into the periplasmic space of specific substrates. It could act to transduce energy from the cytoplasmic membrane to specific energy-requiring processes in the outer membrane, resulting in the release into the periplasm of ligands bound by these outer membrane proteins. Required for heme utilization and virulence.</text>
</comment>
<comment type="subcellular location">
    <subcellularLocation>
        <location evidence="1">Cell inner membrane</location>
        <topology evidence="1">Single-pass membrane protein</topology>
        <orientation evidence="1">Periplasmic side</orientation>
    </subcellularLocation>
</comment>
<comment type="similarity">
    <text evidence="5">Belongs to the TonB family.</text>
</comment>
<dbReference type="EMBL" id="U04996">
    <property type="protein sequence ID" value="AAA60460.1"/>
    <property type="molecule type" value="Genomic_DNA"/>
</dbReference>
<dbReference type="EMBL" id="L42023">
    <property type="protein sequence ID" value="AAC21917.1"/>
    <property type="molecule type" value="Genomic_DNA"/>
</dbReference>
<dbReference type="PIR" id="F64057">
    <property type="entry name" value="F64057"/>
</dbReference>
<dbReference type="RefSeq" id="NP_438420.1">
    <property type="nucleotide sequence ID" value="NC_000907.1"/>
</dbReference>
<dbReference type="SMR" id="P42872"/>
<dbReference type="STRING" id="71421.HI_0251"/>
<dbReference type="EnsemblBacteria" id="AAC21917">
    <property type="protein sequence ID" value="AAC21917"/>
    <property type="gene ID" value="HI_0251"/>
</dbReference>
<dbReference type="KEGG" id="hin:HI_0251"/>
<dbReference type="PATRIC" id="fig|71421.8.peg.266"/>
<dbReference type="eggNOG" id="COG0810">
    <property type="taxonomic scope" value="Bacteria"/>
</dbReference>
<dbReference type="HOGENOM" id="CLU_076333_5_0_6"/>
<dbReference type="OrthoDB" id="9115347at2"/>
<dbReference type="BioCyc" id="HINF71421:G1GJ1-265-MONOMER"/>
<dbReference type="Proteomes" id="UP000000579">
    <property type="component" value="Chromosome"/>
</dbReference>
<dbReference type="GO" id="GO:0030288">
    <property type="term" value="C:outer membrane-bounded periplasmic space"/>
    <property type="evidence" value="ECO:0007669"/>
    <property type="project" value="InterPro"/>
</dbReference>
<dbReference type="GO" id="GO:0098797">
    <property type="term" value="C:plasma membrane protein complex"/>
    <property type="evidence" value="ECO:0000318"/>
    <property type="project" value="GO_Central"/>
</dbReference>
<dbReference type="GO" id="GO:0031992">
    <property type="term" value="F:energy transducer activity"/>
    <property type="evidence" value="ECO:0000318"/>
    <property type="project" value="GO_Central"/>
</dbReference>
<dbReference type="GO" id="GO:0015031">
    <property type="term" value="P:protein transport"/>
    <property type="evidence" value="ECO:0007669"/>
    <property type="project" value="UniProtKB-KW"/>
</dbReference>
<dbReference type="GO" id="GO:0015891">
    <property type="term" value="P:siderophore transport"/>
    <property type="evidence" value="ECO:0007669"/>
    <property type="project" value="InterPro"/>
</dbReference>
<dbReference type="GO" id="GO:0055085">
    <property type="term" value="P:transmembrane transport"/>
    <property type="evidence" value="ECO:0007669"/>
    <property type="project" value="InterPro"/>
</dbReference>
<dbReference type="Gene3D" id="3.30.1150.10">
    <property type="match status" value="1"/>
</dbReference>
<dbReference type="InterPro" id="IPR003538">
    <property type="entry name" value="TonB"/>
</dbReference>
<dbReference type="InterPro" id="IPR051045">
    <property type="entry name" value="TonB-dependent_transducer"/>
</dbReference>
<dbReference type="InterPro" id="IPR006260">
    <property type="entry name" value="TonB/TolA_C"/>
</dbReference>
<dbReference type="InterPro" id="IPR037682">
    <property type="entry name" value="TonB_C"/>
</dbReference>
<dbReference type="NCBIfam" id="TIGR01352">
    <property type="entry name" value="tonB_Cterm"/>
    <property type="match status" value="1"/>
</dbReference>
<dbReference type="PANTHER" id="PTHR33446:SF2">
    <property type="entry name" value="PROTEIN TONB"/>
    <property type="match status" value="1"/>
</dbReference>
<dbReference type="PANTHER" id="PTHR33446">
    <property type="entry name" value="PROTEIN TONB-RELATED"/>
    <property type="match status" value="1"/>
</dbReference>
<dbReference type="Pfam" id="PF03544">
    <property type="entry name" value="TonB_C"/>
    <property type="match status" value="1"/>
</dbReference>
<dbReference type="PRINTS" id="PR01374">
    <property type="entry name" value="TONBPROTEIN"/>
</dbReference>
<dbReference type="SUPFAM" id="SSF74653">
    <property type="entry name" value="TolA/TonB C-terminal domain"/>
    <property type="match status" value="1"/>
</dbReference>
<dbReference type="PROSITE" id="PS52015">
    <property type="entry name" value="TONB_CTD"/>
    <property type="match status" value="1"/>
</dbReference>
<feature type="chain" id="PRO_0000196197" description="Protein TonB">
    <location>
        <begin position="1"/>
        <end position="270"/>
    </location>
</feature>
<feature type="topological domain" description="Cytoplasmic" evidence="2">
    <location>
        <begin position="1"/>
        <end position="7"/>
    </location>
</feature>
<feature type="transmembrane region" description="Helical; Signal-anchor" evidence="2">
    <location>
        <begin position="8"/>
        <end position="27"/>
    </location>
</feature>
<feature type="topological domain" description="Periplasmic" evidence="2">
    <location>
        <begin position="28"/>
        <end position="270"/>
    </location>
</feature>
<feature type="repeat" description="1">
    <location>
        <begin position="70"/>
        <end position="71"/>
    </location>
</feature>
<feature type="repeat" description="2">
    <location>
        <begin position="72"/>
        <end position="73"/>
    </location>
</feature>
<feature type="repeat" description="3">
    <location>
        <begin position="74"/>
        <end position="75"/>
    </location>
</feature>
<feature type="repeat" description="4">
    <location>
        <begin position="76"/>
        <end position="77"/>
    </location>
</feature>
<feature type="domain" description="TonB C-terminal" evidence="3">
    <location>
        <begin position="182"/>
        <end position="270"/>
    </location>
</feature>
<feature type="region of interest" description="Disordered" evidence="4">
    <location>
        <begin position="56"/>
        <end position="178"/>
    </location>
</feature>
<feature type="region of interest" description="4 X 2 AA tandem repeats of E-P">
    <location>
        <begin position="70"/>
        <end position="77"/>
    </location>
</feature>
<feature type="compositionally biased region" description="Basic and acidic residues" evidence="4">
    <location>
        <begin position="82"/>
        <end position="113"/>
    </location>
</feature>
<feature type="compositionally biased region" description="Basic residues" evidence="4">
    <location>
        <begin position="114"/>
        <end position="126"/>
    </location>
</feature>
<feature type="compositionally biased region" description="Basic and acidic residues" evidence="4">
    <location>
        <begin position="127"/>
        <end position="146"/>
    </location>
</feature>
<feature type="compositionally biased region" description="Low complexity" evidence="4">
    <location>
        <begin position="158"/>
        <end position="168"/>
    </location>
</feature>
<feature type="compositionally biased region" description="Polar residues" evidence="4">
    <location>
        <begin position="169"/>
        <end position="178"/>
    </location>
</feature>
<feature type="sequence variant" description="In strain: TN106.">
    <original>A</original>
    <variation>V</variation>
    <location>
        <position position="17"/>
    </location>
</feature>
<feature type="sequence variant" description="In strain: TN106.">
    <original>E</original>
    <variation>K</variation>
    <location>
        <position position="31"/>
    </location>
</feature>
<feature type="sequence variant" description="In strain: TN106.">
    <original>D</original>
    <variation>N</variation>
    <location>
        <position position="66"/>
    </location>
</feature>
<feature type="sequence variant" description="In strain: TN106.">
    <location>
        <begin position="76"/>
        <end position="84"/>
    </location>
</feature>
<feature type="sequence variant" description="In strain: TN106.">
    <original>G</original>
    <variation>E</variation>
    <location>
        <position position="116"/>
    </location>
</feature>
<feature type="sequence variant" description="In strain: TN106.">
    <original>G</original>
    <variation>E</variation>
    <location>
        <position position="120"/>
    </location>
</feature>
<feature type="sequence variant" description="In strain: TN106.">
    <original>K</original>
    <variation>Q</variation>
    <location>
        <position position="134"/>
    </location>
</feature>
<feature type="sequence variant" description="In strain: TN106.">
    <original>E</original>
    <variation>D</variation>
    <location>
        <position position="140"/>
    </location>
</feature>
<feature type="sequence variant" description="In strain: TN106.">
    <original>E</original>
    <variation>K</variation>
    <location>
        <position position="146"/>
    </location>
</feature>
<feature type="sequence variant" description="In strain: TN106.">
    <original>K</original>
    <variation>R</variation>
    <location>
        <position position="226"/>
    </location>
</feature>
<accession>P42872</accession>
<keyword id="KW-0997">Cell inner membrane</keyword>
<keyword id="KW-1003">Cell membrane</keyword>
<keyword id="KW-0472">Membrane</keyword>
<keyword id="KW-0653">Protein transport</keyword>
<keyword id="KW-1185">Reference proteome</keyword>
<keyword id="KW-0677">Repeat</keyword>
<keyword id="KW-0735">Signal-anchor</keyword>
<keyword id="KW-0812">Transmembrane</keyword>
<keyword id="KW-1133">Transmembrane helix</keyword>
<keyword id="KW-0813">Transport</keyword>
<keyword id="KW-0843">Virulence</keyword>
<evidence type="ECO:0000250" key="1"/>
<evidence type="ECO:0000255" key="2"/>
<evidence type="ECO:0000255" key="3">
    <source>
        <dbReference type="PROSITE-ProRule" id="PRU01359"/>
    </source>
</evidence>
<evidence type="ECO:0000256" key="4">
    <source>
        <dbReference type="SAM" id="MobiDB-lite"/>
    </source>
</evidence>
<evidence type="ECO:0000305" key="5"/>
<name>TONB_HAEIN</name>
<organism>
    <name type="scientific">Haemophilus influenzae (strain ATCC 51907 / DSM 11121 / KW20 / Rd)</name>
    <dbReference type="NCBI Taxonomy" id="71421"/>
    <lineage>
        <taxon>Bacteria</taxon>
        <taxon>Pseudomonadati</taxon>
        <taxon>Pseudomonadota</taxon>
        <taxon>Gammaproteobacteria</taxon>
        <taxon>Pasteurellales</taxon>
        <taxon>Pasteurellaceae</taxon>
        <taxon>Haemophilus</taxon>
    </lineage>
</organism>
<reference key="1">
    <citation type="journal article" date="1994" name="Infect. Immun.">
        <title>A functional tonB gene is required for both utilization of heme and virulence expression by Haemophilus influenzae type b.</title>
        <authorList>
            <person name="Jarosik G.P."/>
            <person name="Sanders J.D."/>
            <person name="Cope L.D."/>
            <person name="Mueller-Eberhard U."/>
            <person name="Hansen E.J."/>
        </authorList>
    </citation>
    <scope>NUCLEOTIDE SEQUENCE [GENOMIC DNA]</scope>
    <source>
        <strain>NTHi TN106</strain>
    </source>
</reference>
<reference key="2">
    <citation type="journal article" date="1995" name="Science">
        <title>Whole-genome random sequencing and assembly of Haemophilus influenzae Rd.</title>
        <authorList>
            <person name="Fleischmann R.D."/>
            <person name="Adams M.D."/>
            <person name="White O."/>
            <person name="Clayton R.A."/>
            <person name="Kirkness E.F."/>
            <person name="Kerlavage A.R."/>
            <person name="Bult C.J."/>
            <person name="Tomb J.-F."/>
            <person name="Dougherty B.A."/>
            <person name="Merrick J.M."/>
            <person name="McKenney K."/>
            <person name="Sutton G.G."/>
            <person name="FitzHugh W."/>
            <person name="Fields C.A."/>
            <person name="Gocayne J.D."/>
            <person name="Scott J.D."/>
            <person name="Shirley R."/>
            <person name="Liu L.-I."/>
            <person name="Glodek A."/>
            <person name="Kelley J.M."/>
            <person name="Weidman J.F."/>
            <person name="Phillips C.A."/>
            <person name="Spriggs T."/>
            <person name="Hedblom E."/>
            <person name="Cotton M.D."/>
            <person name="Utterback T.R."/>
            <person name="Hanna M.C."/>
            <person name="Nguyen D.T."/>
            <person name="Saudek D.M."/>
            <person name="Brandon R.C."/>
            <person name="Fine L.D."/>
            <person name="Fritchman J.L."/>
            <person name="Fuhrmann J.L."/>
            <person name="Geoghagen N.S.M."/>
            <person name="Gnehm C.L."/>
            <person name="McDonald L.A."/>
            <person name="Small K.V."/>
            <person name="Fraser C.M."/>
            <person name="Smith H.O."/>
            <person name="Venter J.C."/>
        </authorList>
    </citation>
    <scope>NUCLEOTIDE SEQUENCE [LARGE SCALE GENOMIC DNA]</scope>
    <source>
        <strain>ATCC 51907 / DSM 11121 / KW20 / Rd</strain>
    </source>
</reference>
<sequence>MQQTKRSLLGLLISLIAHGIVIGFILWNWNEPSDSANSAQGDISTSISMELLQGMVLEEPAPEPEDVQKEPEPEPEPGNVQKEPEPEKQEIVEDPTIKPEPKKIKEPEKEKPKPKGKPKGKPKNKPKKEVKPQKKPINKELPKGDENIDSSANVNDKASTTSAANSNAQVAGSGTDTSEIAAYRSAIRREIESHKRYPTRAKIMRKQGKVSVSFNVGADGSLSGAKVTKSSGDESLDKAALDAINVSRSVGTRPAGFPSSLSVQISFTLQ</sequence>